<protein>
    <recommendedName>
        <fullName evidence="1">Uracil phosphoribosyltransferase</fullName>
        <ecNumber evidence="1">2.4.2.9</ecNumber>
    </recommendedName>
    <alternativeName>
        <fullName evidence="1">UMP pyrophosphorylase</fullName>
    </alternativeName>
    <alternativeName>
        <fullName evidence="1">UPRTase</fullName>
    </alternativeName>
</protein>
<keyword id="KW-0021">Allosteric enzyme</keyword>
<keyword id="KW-0328">Glycosyltransferase</keyword>
<keyword id="KW-0342">GTP-binding</keyword>
<keyword id="KW-0460">Magnesium</keyword>
<keyword id="KW-0547">Nucleotide-binding</keyword>
<keyword id="KW-1185">Reference proteome</keyword>
<keyword id="KW-0808">Transferase</keyword>
<dbReference type="EC" id="2.4.2.9" evidence="1"/>
<dbReference type="EMBL" id="CP000382">
    <property type="protein sequence ID" value="ABK62511.1"/>
    <property type="molecule type" value="Genomic_DNA"/>
</dbReference>
<dbReference type="RefSeq" id="WP_011722987.1">
    <property type="nucleotide sequence ID" value="NC_008593.1"/>
</dbReference>
<dbReference type="SMR" id="A0Q306"/>
<dbReference type="STRING" id="386415.NT01CX_0542"/>
<dbReference type="KEGG" id="cno:NT01CX_0542"/>
<dbReference type="eggNOG" id="COG0035">
    <property type="taxonomic scope" value="Bacteria"/>
</dbReference>
<dbReference type="HOGENOM" id="CLU_067096_2_2_9"/>
<dbReference type="UniPathway" id="UPA00574">
    <property type="reaction ID" value="UER00636"/>
</dbReference>
<dbReference type="Proteomes" id="UP000008220">
    <property type="component" value="Chromosome"/>
</dbReference>
<dbReference type="GO" id="GO:0005525">
    <property type="term" value="F:GTP binding"/>
    <property type="evidence" value="ECO:0007669"/>
    <property type="project" value="UniProtKB-KW"/>
</dbReference>
<dbReference type="GO" id="GO:0000287">
    <property type="term" value="F:magnesium ion binding"/>
    <property type="evidence" value="ECO:0007669"/>
    <property type="project" value="UniProtKB-UniRule"/>
</dbReference>
<dbReference type="GO" id="GO:0004845">
    <property type="term" value="F:uracil phosphoribosyltransferase activity"/>
    <property type="evidence" value="ECO:0007669"/>
    <property type="project" value="UniProtKB-UniRule"/>
</dbReference>
<dbReference type="GO" id="GO:0044206">
    <property type="term" value="P:UMP salvage"/>
    <property type="evidence" value="ECO:0007669"/>
    <property type="project" value="UniProtKB-UniRule"/>
</dbReference>
<dbReference type="GO" id="GO:0006223">
    <property type="term" value="P:uracil salvage"/>
    <property type="evidence" value="ECO:0007669"/>
    <property type="project" value="InterPro"/>
</dbReference>
<dbReference type="CDD" id="cd06223">
    <property type="entry name" value="PRTases_typeI"/>
    <property type="match status" value="1"/>
</dbReference>
<dbReference type="FunFam" id="3.40.50.2020:FF:000003">
    <property type="entry name" value="Uracil phosphoribosyltransferase"/>
    <property type="match status" value="1"/>
</dbReference>
<dbReference type="Gene3D" id="3.40.50.2020">
    <property type="match status" value="1"/>
</dbReference>
<dbReference type="HAMAP" id="MF_01218_B">
    <property type="entry name" value="Upp_B"/>
    <property type="match status" value="1"/>
</dbReference>
<dbReference type="InterPro" id="IPR000836">
    <property type="entry name" value="PRibTrfase_dom"/>
</dbReference>
<dbReference type="InterPro" id="IPR029057">
    <property type="entry name" value="PRTase-like"/>
</dbReference>
<dbReference type="InterPro" id="IPR034332">
    <property type="entry name" value="Upp_B"/>
</dbReference>
<dbReference type="InterPro" id="IPR050054">
    <property type="entry name" value="UPRTase/APRTase"/>
</dbReference>
<dbReference type="InterPro" id="IPR005765">
    <property type="entry name" value="Ura_phspho_trans"/>
</dbReference>
<dbReference type="NCBIfam" id="NF001097">
    <property type="entry name" value="PRK00129.1"/>
    <property type="match status" value="1"/>
</dbReference>
<dbReference type="NCBIfam" id="TIGR01091">
    <property type="entry name" value="upp"/>
    <property type="match status" value="1"/>
</dbReference>
<dbReference type="PANTHER" id="PTHR32315">
    <property type="entry name" value="ADENINE PHOSPHORIBOSYLTRANSFERASE"/>
    <property type="match status" value="1"/>
</dbReference>
<dbReference type="PANTHER" id="PTHR32315:SF4">
    <property type="entry name" value="URACIL PHOSPHORIBOSYLTRANSFERASE, CHLOROPLASTIC"/>
    <property type="match status" value="1"/>
</dbReference>
<dbReference type="Pfam" id="PF14681">
    <property type="entry name" value="UPRTase"/>
    <property type="match status" value="1"/>
</dbReference>
<dbReference type="SUPFAM" id="SSF53271">
    <property type="entry name" value="PRTase-like"/>
    <property type="match status" value="1"/>
</dbReference>
<name>UPP_CLONN</name>
<evidence type="ECO:0000255" key="1">
    <source>
        <dbReference type="HAMAP-Rule" id="MF_01218"/>
    </source>
</evidence>
<sequence>MSKVTQIAHPLILHKLAIIRNKNTGSKDFRELVEEVAMLMAYEVTRDLPLEEVEIETPICKTKCKMLSGKKMAIVPILRAGLGMVDGMLKLIPAAKVGHIGMYRDEETFKPVEYFCKMPQDIHERDIIVTDPMLATGGSAIDAINALKKRGAKSIRLMCLISSPEGIKAVMDAHPDVDIYVGDIDERLNEHGYIIPGLGDAGDRLFGTK</sequence>
<gene>
    <name evidence="1" type="primary">upp</name>
    <name type="ordered locus">NT01CX_0542</name>
</gene>
<reference key="1">
    <citation type="journal article" date="2006" name="Nat. Biotechnol.">
        <title>The genome and transcriptomes of the anti-tumor agent Clostridium novyi-NT.</title>
        <authorList>
            <person name="Bettegowda C."/>
            <person name="Huang X."/>
            <person name="Lin J."/>
            <person name="Cheong I."/>
            <person name="Kohli M."/>
            <person name="Szabo S.A."/>
            <person name="Zhang X."/>
            <person name="Diaz L.A. Jr."/>
            <person name="Velculescu V.E."/>
            <person name="Parmigiani G."/>
            <person name="Kinzler K.W."/>
            <person name="Vogelstein B."/>
            <person name="Zhou S."/>
        </authorList>
    </citation>
    <scope>NUCLEOTIDE SEQUENCE [LARGE SCALE GENOMIC DNA]</scope>
    <source>
        <strain>NT</strain>
    </source>
</reference>
<accession>A0Q306</accession>
<proteinExistence type="inferred from homology"/>
<organism>
    <name type="scientific">Clostridium novyi (strain NT)</name>
    <dbReference type="NCBI Taxonomy" id="386415"/>
    <lineage>
        <taxon>Bacteria</taxon>
        <taxon>Bacillati</taxon>
        <taxon>Bacillota</taxon>
        <taxon>Clostridia</taxon>
        <taxon>Eubacteriales</taxon>
        <taxon>Clostridiaceae</taxon>
        <taxon>Clostridium</taxon>
    </lineage>
</organism>
<comment type="function">
    <text evidence="1">Catalyzes the conversion of uracil and 5-phospho-alpha-D-ribose 1-diphosphate (PRPP) to UMP and diphosphate.</text>
</comment>
<comment type="catalytic activity">
    <reaction evidence="1">
        <text>UMP + diphosphate = 5-phospho-alpha-D-ribose 1-diphosphate + uracil</text>
        <dbReference type="Rhea" id="RHEA:13017"/>
        <dbReference type="ChEBI" id="CHEBI:17568"/>
        <dbReference type="ChEBI" id="CHEBI:33019"/>
        <dbReference type="ChEBI" id="CHEBI:57865"/>
        <dbReference type="ChEBI" id="CHEBI:58017"/>
        <dbReference type="EC" id="2.4.2.9"/>
    </reaction>
</comment>
<comment type="cofactor">
    <cofactor evidence="1">
        <name>Mg(2+)</name>
        <dbReference type="ChEBI" id="CHEBI:18420"/>
    </cofactor>
    <text evidence="1">Binds 1 Mg(2+) ion per subunit. The magnesium is bound as Mg-PRPP.</text>
</comment>
<comment type="activity regulation">
    <text evidence="1">Allosterically activated by GTP.</text>
</comment>
<comment type="pathway">
    <text evidence="1">Pyrimidine metabolism; UMP biosynthesis via salvage pathway; UMP from uracil: step 1/1.</text>
</comment>
<comment type="similarity">
    <text evidence="1">Belongs to the UPRTase family.</text>
</comment>
<feature type="chain" id="PRO_1000053706" description="Uracil phosphoribosyltransferase">
    <location>
        <begin position="1"/>
        <end position="209"/>
    </location>
</feature>
<feature type="binding site" evidence="1">
    <location>
        <position position="79"/>
    </location>
    <ligand>
        <name>5-phospho-alpha-D-ribose 1-diphosphate</name>
        <dbReference type="ChEBI" id="CHEBI:58017"/>
    </ligand>
</feature>
<feature type="binding site" evidence="1">
    <location>
        <position position="104"/>
    </location>
    <ligand>
        <name>5-phospho-alpha-D-ribose 1-diphosphate</name>
        <dbReference type="ChEBI" id="CHEBI:58017"/>
    </ligand>
</feature>
<feature type="binding site" evidence="1">
    <location>
        <begin position="131"/>
        <end position="139"/>
    </location>
    <ligand>
        <name>5-phospho-alpha-D-ribose 1-diphosphate</name>
        <dbReference type="ChEBI" id="CHEBI:58017"/>
    </ligand>
</feature>
<feature type="binding site" evidence="1">
    <location>
        <position position="194"/>
    </location>
    <ligand>
        <name>uracil</name>
        <dbReference type="ChEBI" id="CHEBI:17568"/>
    </ligand>
</feature>
<feature type="binding site" evidence="1">
    <location>
        <begin position="199"/>
        <end position="201"/>
    </location>
    <ligand>
        <name>uracil</name>
        <dbReference type="ChEBI" id="CHEBI:17568"/>
    </ligand>
</feature>
<feature type="binding site" evidence="1">
    <location>
        <position position="200"/>
    </location>
    <ligand>
        <name>5-phospho-alpha-D-ribose 1-diphosphate</name>
        <dbReference type="ChEBI" id="CHEBI:58017"/>
    </ligand>
</feature>